<comment type="function">
    <text evidence="1">Catalyzes the radical-mediated insertion of two sulfur atoms into the C-6 and C-8 positions of the octanoyl moiety bound to the lipoyl domains of lipoate-dependent enzymes, thereby converting the octanoylated domains into lipoylated derivatives.</text>
</comment>
<comment type="catalytic activity">
    <reaction evidence="1">
        <text>[[Fe-S] cluster scaffold protein carrying a second [4Fe-4S](2+) cluster] + N(6)-octanoyl-L-lysyl-[protein] + 2 oxidized [2Fe-2S]-[ferredoxin] + 2 S-adenosyl-L-methionine + 4 H(+) = [[Fe-S] cluster scaffold protein] + N(6)-[(R)-dihydrolipoyl]-L-lysyl-[protein] + 4 Fe(3+) + 2 hydrogen sulfide + 2 5'-deoxyadenosine + 2 L-methionine + 2 reduced [2Fe-2S]-[ferredoxin]</text>
        <dbReference type="Rhea" id="RHEA:16585"/>
        <dbReference type="Rhea" id="RHEA-COMP:9928"/>
        <dbReference type="Rhea" id="RHEA-COMP:10000"/>
        <dbReference type="Rhea" id="RHEA-COMP:10001"/>
        <dbReference type="Rhea" id="RHEA-COMP:10475"/>
        <dbReference type="Rhea" id="RHEA-COMP:14568"/>
        <dbReference type="Rhea" id="RHEA-COMP:14569"/>
        <dbReference type="ChEBI" id="CHEBI:15378"/>
        <dbReference type="ChEBI" id="CHEBI:17319"/>
        <dbReference type="ChEBI" id="CHEBI:29034"/>
        <dbReference type="ChEBI" id="CHEBI:29919"/>
        <dbReference type="ChEBI" id="CHEBI:33722"/>
        <dbReference type="ChEBI" id="CHEBI:33737"/>
        <dbReference type="ChEBI" id="CHEBI:33738"/>
        <dbReference type="ChEBI" id="CHEBI:57844"/>
        <dbReference type="ChEBI" id="CHEBI:59789"/>
        <dbReference type="ChEBI" id="CHEBI:78809"/>
        <dbReference type="ChEBI" id="CHEBI:83100"/>
        <dbReference type="EC" id="2.8.1.8"/>
    </reaction>
</comment>
<comment type="cofactor">
    <cofactor evidence="1">
        <name>[4Fe-4S] cluster</name>
        <dbReference type="ChEBI" id="CHEBI:49883"/>
    </cofactor>
    <text evidence="1">Binds 2 [4Fe-4S] clusters per subunit. One cluster is coordinated with 3 cysteines and an exchangeable S-adenosyl-L-methionine.</text>
</comment>
<comment type="pathway">
    <text evidence="1">Protein modification; protein lipoylation via endogenous pathway; protein N(6)-(lipoyl)lysine from octanoyl-[acyl-carrier-protein]: step 2/2.</text>
</comment>
<comment type="subcellular location">
    <subcellularLocation>
        <location evidence="1">Mitochondrion</location>
    </subcellularLocation>
</comment>
<comment type="similarity">
    <text evidence="1">Belongs to the radical SAM superfamily. Lipoyl synthase family.</text>
</comment>
<sequence length="382" mass="41652">MHGRRHLAASLARALTYAPSRSISSTPSLLQTLDPSTPSPAAAPPTAGRLAELRQRLQADAPSLGDFTYSVEVGTRKKPLPKPKWMKETIPGGAKYAGIKAKLRELKLHTVCEEARCPNLGECWSGGETGTATATIMILGDTCTRGCRFCNVKTSRTPPPPDPDEPSNVAQAIASWGLEYIVITSVDRDDLPDQGSGHFAETVQKLKVLKPEMLIEALVPDFRGDPACVEKVATSGLHVFAHNIETVEELQRNVRDHRANFKQSIDVLKLAKEYAPAGTLTKTSIMLGCGETPDQVISTTEKVRAAGVDVMTFGQYMRPSKRHMPVSEYVTPEAFERYRSLGVDMGFRYVASGPMVRSSYKAGEFYIKAMIEADRAKATTAI</sequence>
<keyword id="KW-0004">4Fe-4S</keyword>
<keyword id="KW-0408">Iron</keyword>
<keyword id="KW-0411">Iron-sulfur</keyword>
<keyword id="KW-0479">Metal-binding</keyword>
<keyword id="KW-0496">Mitochondrion</keyword>
<keyword id="KW-1185">Reference proteome</keyword>
<keyword id="KW-0949">S-adenosyl-L-methionine</keyword>
<keyword id="KW-0808">Transferase</keyword>
<keyword id="KW-0809">Transit peptide</keyword>
<gene>
    <name evidence="1" type="primary">LIP1</name>
    <name type="ordered locus">Os04g0455800</name>
    <name type="ordered locus">LOC_Os04g38330</name>
    <name type="ORF">OsJ_15022</name>
    <name type="ORF">OSJNBa0006M15.16</name>
</gene>
<accession>Q7XRF1</accession>
<accession>A0A0P0WB88</accession>
<dbReference type="EC" id="2.8.1.8" evidence="1"/>
<dbReference type="EMBL" id="AL731584">
    <property type="protein sequence ID" value="CAE02573.2"/>
    <property type="molecule type" value="Genomic_DNA"/>
</dbReference>
<dbReference type="EMBL" id="AP008210">
    <property type="protein sequence ID" value="BAF14878.1"/>
    <property type="molecule type" value="Genomic_DNA"/>
</dbReference>
<dbReference type="EMBL" id="AP014960">
    <property type="protein sequence ID" value="BAS89501.1"/>
    <property type="molecule type" value="Genomic_DNA"/>
</dbReference>
<dbReference type="EMBL" id="CM000141">
    <property type="protein sequence ID" value="EAZ30943.1"/>
    <property type="molecule type" value="Genomic_DNA"/>
</dbReference>
<dbReference type="EMBL" id="AK120652">
    <property type="protein sequence ID" value="BAH00110.1"/>
    <property type="molecule type" value="mRNA"/>
</dbReference>
<dbReference type="RefSeq" id="XP_015633364.1">
    <property type="nucleotide sequence ID" value="XM_015777878.1"/>
</dbReference>
<dbReference type="SMR" id="Q7XRF1"/>
<dbReference type="FunCoup" id="Q7XRF1">
    <property type="interactions" value="1178"/>
</dbReference>
<dbReference type="STRING" id="39947.Q7XRF1"/>
<dbReference type="PaxDb" id="39947-Q7XRF1"/>
<dbReference type="EnsemblPlants" id="Os04t0455800-01">
    <property type="protein sequence ID" value="Os04t0455800-01"/>
    <property type="gene ID" value="Os04g0455800"/>
</dbReference>
<dbReference type="Gramene" id="Os04t0455800-01">
    <property type="protein sequence ID" value="Os04t0455800-01"/>
    <property type="gene ID" value="Os04g0455800"/>
</dbReference>
<dbReference type="KEGG" id="dosa:Os04g0455800"/>
<dbReference type="eggNOG" id="KOG2672">
    <property type="taxonomic scope" value="Eukaryota"/>
</dbReference>
<dbReference type="HOGENOM" id="CLU_033144_2_0_1"/>
<dbReference type="InParanoid" id="Q7XRF1"/>
<dbReference type="OMA" id="PYCDIDF"/>
<dbReference type="OrthoDB" id="3231at2759"/>
<dbReference type="UniPathway" id="UPA00538">
    <property type="reaction ID" value="UER00593"/>
</dbReference>
<dbReference type="Proteomes" id="UP000000763">
    <property type="component" value="Chromosome 4"/>
</dbReference>
<dbReference type="Proteomes" id="UP000007752">
    <property type="component" value="Chromosome 4"/>
</dbReference>
<dbReference type="Proteomes" id="UP000059680">
    <property type="component" value="Chromosome 4"/>
</dbReference>
<dbReference type="GO" id="GO:0005759">
    <property type="term" value="C:mitochondrial matrix"/>
    <property type="evidence" value="ECO:0007669"/>
    <property type="project" value="EnsemblPlants"/>
</dbReference>
<dbReference type="GO" id="GO:0005739">
    <property type="term" value="C:mitochondrion"/>
    <property type="evidence" value="ECO:0000318"/>
    <property type="project" value="GO_Central"/>
</dbReference>
<dbReference type="GO" id="GO:0051539">
    <property type="term" value="F:4 iron, 4 sulfur cluster binding"/>
    <property type="evidence" value="ECO:0007669"/>
    <property type="project" value="UniProtKB-UniRule"/>
</dbReference>
<dbReference type="GO" id="GO:0016992">
    <property type="term" value="F:lipoate synthase activity"/>
    <property type="evidence" value="ECO:0000318"/>
    <property type="project" value="GO_Central"/>
</dbReference>
<dbReference type="GO" id="GO:0046872">
    <property type="term" value="F:metal ion binding"/>
    <property type="evidence" value="ECO:0007669"/>
    <property type="project" value="UniProtKB-KW"/>
</dbReference>
<dbReference type="GO" id="GO:0009107">
    <property type="term" value="P:lipoate biosynthetic process"/>
    <property type="evidence" value="ECO:0000318"/>
    <property type="project" value="GO_Central"/>
</dbReference>
<dbReference type="CDD" id="cd01335">
    <property type="entry name" value="Radical_SAM"/>
    <property type="match status" value="1"/>
</dbReference>
<dbReference type="FunFam" id="3.20.20.70:FF:000125">
    <property type="entry name" value="Lipoyl synthase, mitochondrial"/>
    <property type="match status" value="1"/>
</dbReference>
<dbReference type="Gene3D" id="3.20.20.70">
    <property type="entry name" value="Aldolase class I"/>
    <property type="match status" value="1"/>
</dbReference>
<dbReference type="HAMAP" id="MF_00206">
    <property type="entry name" value="Lipoyl_synth"/>
    <property type="match status" value="1"/>
</dbReference>
<dbReference type="HAMAP" id="MF_03128">
    <property type="entry name" value="Lipoyl_synth_plantM"/>
    <property type="match status" value="1"/>
</dbReference>
<dbReference type="InterPro" id="IPR013785">
    <property type="entry name" value="Aldolase_TIM"/>
</dbReference>
<dbReference type="InterPro" id="IPR006638">
    <property type="entry name" value="Elp3/MiaA/NifB-like_rSAM"/>
</dbReference>
<dbReference type="InterPro" id="IPR031691">
    <property type="entry name" value="LIAS_N"/>
</dbReference>
<dbReference type="InterPro" id="IPR003698">
    <property type="entry name" value="Lipoyl_synth"/>
</dbReference>
<dbReference type="InterPro" id="IPR027527">
    <property type="entry name" value="Lipoyl_synth_mt"/>
</dbReference>
<dbReference type="InterPro" id="IPR007197">
    <property type="entry name" value="rSAM"/>
</dbReference>
<dbReference type="NCBIfam" id="TIGR00510">
    <property type="entry name" value="lipA"/>
    <property type="match status" value="1"/>
</dbReference>
<dbReference type="NCBIfam" id="NF004019">
    <property type="entry name" value="PRK05481.1"/>
    <property type="match status" value="1"/>
</dbReference>
<dbReference type="NCBIfam" id="NF009544">
    <property type="entry name" value="PRK12928.1"/>
    <property type="match status" value="1"/>
</dbReference>
<dbReference type="PANTHER" id="PTHR10949">
    <property type="entry name" value="LIPOYL SYNTHASE"/>
    <property type="match status" value="1"/>
</dbReference>
<dbReference type="PANTHER" id="PTHR10949:SF0">
    <property type="entry name" value="LIPOYL SYNTHASE, MITOCHONDRIAL"/>
    <property type="match status" value="1"/>
</dbReference>
<dbReference type="Pfam" id="PF16881">
    <property type="entry name" value="LIAS_N"/>
    <property type="match status" value="1"/>
</dbReference>
<dbReference type="Pfam" id="PF04055">
    <property type="entry name" value="Radical_SAM"/>
    <property type="match status" value="1"/>
</dbReference>
<dbReference type="SFLD" id="SFLDF00271">
    <property type="entry name" value="lipoyl_synthase"/>
    <property type="match status" value="1"/>
</dbReference>
<dbReference type="SFLD" id="SFLDS00029">
    <property type="entry name" value="Radical_SAM"/>
    <property type="match status" value="1"/>
</dbReference>
<dbReference type="SMART" id="SM00729">
    <property type="entry name" value="Elp3"/>
    <property type="match status" value="1"/>
</dbReference>
<dbReference type="SUPFAM" id="SSF102114">
    <property type="entry name" value="Radical SAM enzymes"/>
    <property type="match status" value="1"/>
</dbReference>
<dbReference type="PROSITE" id="PS51918">
    <property type="entry name" value="RADICAL_SAM"/>
    <property type="match status" value="1"/>
</dbReference>
<protein>
    <recommendedName>
        <fullName evidence="1">Lipoyl synthase, mitochondrial</fullName>
        <ecNumber evidence="1">2.8.1.8</ecNumber>
    </recommendedName>
    <alternativeName>
        <fullName evidence="1">Lipoate synthase</fullName>
        <shortName evidence="1">LS</shortName>
        <shortName evidence="1">Lip-syn</shortName>
    </alternativeName>
    <alternativeName>
        <fullName evidence="1">Lipoic acid synthase</fullName>
    </alternativeName>
</protein>
<organism>
    <name type="scientific">Oryza sativa subsp. japonica</name>
    <name type="common">Rice</name>
    <dbReference type="NCBI Taxonomy" id="39947"/>
    <lineage>
        <taxon>Eukaryota</taxon>
        <taxon>Viridiplantae</taxon>
        <taxon>Streptophyta</taxon>
        <taxon>Embryophyta</taxon>
        <taxon>Tracheophyta</taxon>
        <taxon>Spermatophyta</taxon>
        <taxon>Magnoliopsida</taxon>
        <taxon>Liliopsida</taxon>
        <taxon>Poales</taxon>
        <taxon>Poaceae</taxon>
        <taxon>BOP clade</taxon>
        <taxon>Oryzoideae</taxon>
        <taxon>Oryzeae</taxon>
        <taxon>Oryzinae</taxon>
        <taxon>Oryza</taxon>
        <taxon>Oryza sativa</taxon>
    </lineage>
</organism>
<proteinExistence type="evidence at transcript level"/>
<reference key="1">
    <citation type="journal article" date="2002" name="Nature">
        <title>Sequence and analysis of rice chromosome 4.</title>
        <authorList>
            <person name="Feng Q."/>
            <person name="Zhang Y."/>
            <person name="Hao P."/>
            <person name="Wang S."/>
            <person name="Fu G."/>
            <person name="Huang Y."/>
            <person name="Li Y."/>
            <person name="Zhu J."/>
            <person name="Liu Y."/>
            <person name="Hu X."/>
            <person name="Jia P."/>
            <person name="Zhang Y."/>
            <person name="Zhao Q."/>
            <person name="Ying K."/>
            <person name="Yu S."/>
            <person name="Tang Y."/>
            <person name="Weng Q."/>
            <person name="Zhang L."/>
            <person name="Lu Y."/>
            <person name="Mu J."/>
            <person name="Lu Y."/>
            <person name="Zhang L.S."/>
            <person name="Yu Z."/>
            <person name="Fan D."/>
            <person name="Liu X."/>
            <person name="Lu T."/>
            <person name="Li C."/>
            <person name="Wu Y."/>
            <person name="Sun T."/>
            <person name="Lei H."/>
            <person name="Li T."/>
            <person name="Hu H."/>
            <person name="Guan J."/>
            <person name="Wu M."/>
            <person name="Zhang R."/>
            <person name="Zhou B."/>
            <person name="Chen Z."/>
            <person name="Chen L."/>
            <person name="Jin Z."/>
            <person name="Wang R."/>
            <person name="Yin H."/>
            <person name="Cai Z."/>
            <person name="Ren S."/>
            <person name="Lv G."/>
            <person name="Gu W."/>
            <person name="Zhu G."/>
            <person name="Tu Y."/>
            <person name="Jia J."/>
            <person name="Zhang Y."/>
            <person name="Chen J."/>
            <person name="Kang H."/>
            <person name="Chen X."/>
            <person name="Shao C."/>
            <person name="Sun Y."/>
            <person name="Hu Q."/>
            <person name="Zhang X."/>
            <person name="Zhang W."/>
            <person name="Wang L."/>
            <person name="Ding C."/>
            <person name="Sheng H."/>
            <person name="Gu J."/>
            <person name="Chen S."/>
            <person name="Ni L."/>
            <person name="Zhu F."/>
            <person name="Chen W."/>
            <person name="Lan L."/>
            <person name="Lai Y."/>
            <person name="Cheng Z."/>
            <person name="Gu M."/>
            <person name="Jiang J."/>
            <person name="Li J."/>
            <person name="Hong G."/>
            <person name="Xue Y."/>
            <person name="Han B."/>
        </authorList>
    </citation>
    <scope>NUCLEOTIDE SEQUENCE [LARGE SCALE GENOMIC DNA]</scope>
    <source>
        <strain>cv. Nipponbare</strain>
    </source>
</reference>
<reference key="2">
    <citation type="journal article" date="2005" name="Nature">
        <title>The map-based sequence of the rice genome.</title>
        <authorList>
            <consortium name="International rice genome sequencing project (IRGSP)"/>
        </authorList>
    </citation>
    <scope>NUCLEOTIDE SEQUENCE [LARGE SCALE GENOMIC DNA]</scope>
    <source>
        <strain>cv. Nipponbare</strain>
    </source>
</reference>
<reference key="3">
    <citation type="journal article" date="2008" name="Nucleic Acids Res.">
        <title>The rice annotation project database (RAP-DB): 2008 update.</title>
        <authorList>
            <consortium name="The rice annotation project (RAP)"/>
        </authorList>
    </citation>
    <scope>GENOME REANNOTATION</scope>
    <source>
        <strain>cv. Nipponbare</strain>
    </source>
</reference>
<reference key="4">
    <citation type="journal article" date="2013" name="Rice">
        <title>Improvement of the Oryza sativa Nipponbare reference genome using next generation sequence and optical map data.</title>
        <authorList>
            <person name="Kawahara Y."/>
            <person name="de la Bastide M."/>
            <person name="Hamilton J.P."/>
            <person name="Kanamori H."/>
            <person name="McCombie W.R."/>
            <person name="Ouyang S."/>
            <person name="Schwartz D.C."/>
            <person name="Tanaka T."/>
            <person name="Wu J."/>
            <person name="Zhou S."/>
            <person name="Childs K.L."/>
            <person name="Davidson R.M."/>
            <person name="Lin H."/>
            <person name="Quesada-Ocampo L."/>
            <person name="Vaillancourt B."/>
            <person name="Sakai H."/>
            <person name="Lee S.S."/>
            <person name="Kim J."/>
            <person name="Numa H."/>
            <person name="Itoh T."/>
            <person name="Buell C.R."/>
            <person name="Matsumoto T."/>
        </authorList>
    </citation>
    <scope>GENOME REANNOTATION</scope>
    <source>
        <strain>cv. Nipponbare</strain>
    </source>
</reference>
<reference key="5">
    <citation type="journal article" date="2005" name="PLoS Biol.">
        <title>The genomes of Oryza sativa: a history of duplications.</title>
        <authorList>
            <person name="Yu J."/>
            <person name="Wang J."/>
            <person name="Lin W."/>
            <person name="Li S."/>
            <person name="Li H."/>
            <person name="Zhou J."/>
            <person name="Ni P."/>
            <person name="Dong W."/>
            <person name="Hu S."/>
            <person name="Zeng C."/>
            <person name="Zhang J."/>
            <person name="Zhang Y."/>
            <person name="Li R."/>
            <person name="Xu Z."/>
            <person name="Li S."/>
            <person name="Li X."/>
            <person name="Zheng H."/>
            <person name="Cong L."/>
            <person name="Lin L."/>
            <person name="Yin J."/>
            <person name="Geng J."/>
            <person name="Li G."/>
            <person name="Shi J."/>
            <person name="Liu J."/>
            <person name="Lv H."/>
            <person name="Li J."/>
            <person name="Wang J."/>
            <person name="Deng Y."/>
            <person name="Ran L."/>
            <person name="Shi X."/>
            <person name="Wang X."/>
            <person name="Wu Q."/>
            <person name="Li C."/>
            <person name="Ren X."/>
            <person name="Wang J."/>
            <person name="Wang X."/>
            <person name="Li D."/>
            <person name="Liu D."/>
            <person name="Zhang X."/>
            <person name="Ji Z."/>
            <person name="Zhao W."/>
            <person name="Sun Y."/>
            <person name="Zhang Z."/>
            <person name="Bao J."/>
            <person name="Han Y."/>
            <person name="Dong L."/>
            <person name="Ji J."/>
            <person name="Chen P."/>
            <person name="Wu S."/>
            <person name="Liu J."/>
            <person name="Xiao Y."/>
            <person name="Bu D."/>
            <person name="Tan J."/>
            <person name="Yang L."/>
            <person name="Ye C."/>
            <person name="Zhang J."/>
            <person name="Xu J."/>
            <person name="Zhou Y."/>
            <person name="Yu Y."/>
            <person name="Zhang B."/>
            <person name="Zhuang S."/>
            <person name="Wei H."/>
            <person name="Liu B."/>
            <person name="Lei M."/>
            <person name="Yu H."/>
            <person name="Li Y."/>
            <person name="Xu H."/>
            <person name="Wei S."/>
            <person name="He X."/>
            <person name="Fang L."/>
            <person name="Zhang Z."/>
            <person name="Zhang Y."/>
            <person name="Huang X."/>
            <person name="Su Z."/>
            <person name="Tong W."/>
            <person name="Li J."/>
            <person name="Tong Z."/>
            <person name="Li S."/>
            <person name="Ye J."/>
            <person name="Wang L."/>
            <person name="Fang L."/>
            <person name="Lei T."/>
            <person name="Chen C.-S."/>
            <person name="Chen H.-C."/>
            <person name="Xu Z."/>
            <person name="Li H."/>
            <person name="Huang H."/>
            <person name="Zhang F."/>
            <person name="Xu H."/>
            <person name="Li N."/>
            <person name="Zhao C."/>
            <person name="Li S."/>
            <person name="Dong L."/>
            <person name="Huang Y."/>
            <person name="Li L."/>
            <person name="Xi Y."/>
            <person name="Qi Q."/>
            <person name="Li W."/>
            <person name="Zhang B."/>
            <person name="Hu W."/>
            <person name="Zhang Y."/>
            <person name="Tian X."/>
            <person name="Jiao Y."/>
            <person name="Liang X."/>
            <person name="Jin J."/>
            <person name="Gao L."/>
            <person name="Zheng W."/>
            <person name="Hao B."/>
            <person name="Liu S.-M."/>
            <person name="Wang W."/>
            <person name="Yuan L."/>
            <person name="Cao M."/>
            <person name="McDermott J."/>
            <person name="Samudrala R."/>
            <person name="Wang J."/>
            <person name="Wong G.K.-S."/>
            <person name="Yang H."/>
        </authorList>
    </citation>
    <scope>NUCLEOTIDE SEQUENCE [LARGE SCALE GENOMIC DNA]</scope>
    <source>
        <strain>cv. Nipponbare</strain>
    </source>
</reference>
<reference key="6">
    <citation type="journal article" date="2003" name="Science">
        <title>Collection, mapping, and annotation of over 28,000 cDNA clones from japonica rice.</title>
        <authorList>
            <consortium name="The rice full-length cDNA consortium"/>
        </authorList>
    </citation>
    <scope>NUCLEOTIDE SEQUENCE [LARGE SCALE MRNA]</scope>
    <source>
        <strain>cv. Nipponbare</strain>
    </source>
</reference>
<evidence type="ECO:0000255" key="1">
    <source>
        <dbReference type="HAMAP-Rule" id="MF_03128"/>
    </source>
</evidence>
<evidence type="ECO:0000255" key="2">
    <source>
        <dbReference type="PROSITE-ProRule" id="PRU01266"/>
    </source>
</evidence>
<evidence type="ECO:0000256" key="3">
    <source>
        <dbReference type="SAM" id="MobiDB-lite"/>
    </source>
</evidence>
<feature type="transit peptide" description="Mitochondrion" evidence="1">
    <location>
        <begin position="1"/>
        <end position="30"/>
    </location>
</feature>
<feature type="chain" id="PRO_0000398849" description="Lipoyl synthase, mitochondrial">
    <location>
        <begin position="31"/>
        <end position="382"/>
    </location>
</feature>
<feature type="domain" description="Radical SAM core" evidence="2">
    <location>
        <begin position="128"/>
        <end position="348"/>
    </location>
</feature>
<feature type="region of interest" description="Disordered" evidence="3">
    <location>
        <begin position="25"/>
        <end position="46"/>
    </location>
</feature>
<feature type="compositionally biased region" description="Polar residues" evidence="3">
    <location>
        <begin position="25"/>
        <end position="34"/>
    </location>
</feature>
<feature type="binding site" evidence="1">
    <location>
        <position position="112"/>
    </location>
    <ligand>
        <name>[4Fe-4S] cluster</name>
        <dbReference type="ChEBI" id="CHEBI:49883"/>
        <label>1</label>
    </ligand>
</feature>
<feature type="binding site" evidence="1">
    <location>
        <position position="117"/>
    </location>
    <ligand>
        <name>[4Fe-4S] cluster</name>
        <dbReference type="ChEBI" id="CHEBI:49883"/>
        <label>1</label>
    </ligand>
</feature>
<feature type="binding site" evidence="1">
    <location>
        <position position="123"/>
    </location>
    <ligand>
        <name>[4Fe-4S] cluster</name>
        <dbReference type="ChEBI" id="CHEBI:49883"/>
        <label>1</label>
    </ligand>
</feature>
<feature type="binding site" evidence="1">
    <location>
        <position position="143"/>
    </location>
    <ligand>
        <name>[4Fe-4S] cluster</name>
        <dbReference type="ChEBI" id="CHEBI:49883"/>
        <label>2</label>
        <note>4Fe-4S-S-AdoMet</note>
    </ligand>
</feature>
<feature type="binding site" evidence="1">
    <location>
        <position position="147"/>
    </location>
    <ligand>
        <name>[4Fe-4S] cluster</name>
        <dbReference type="ChEBI" id="CHEBI:49883"/>
        <label>2</label>
        <note>4Fe-4S-S-AdoMet</note>
    </ligand>
</feature>
<feature type="binding site" evidence="1">
    <location>
        <position position="150"/>
    </location>
    <ligand>
        <name>[4Fe-4S] cluster</name>
        <dbReference type="ChEBI" id="CHEBI:49883"/>
        <label>2</label>
        <note>4Fe-4S-S-AdoMet</note>
    </ligand>
</feature>
<feature type="binding site" evidence="1">
    <location>
        <position position="359"/>
    </location>
    <ligand>
        <name>[4Fe-4S] cluster</name>
        <dbReference type="ChEBI" id="CHEBI:49883"/>
        <label>1</label>
    </ligand>
</feature>
<name>LIAS_ORYSJ</name>